<dbReference type="EC" id="6.1.1.10" evidence="1"/>
<dbReference type="EMBL" id="CP001091">
    <property type="protein sequence ID" value="ACE61009.1"/>
    <property type="molecule type" value="Genomic_DNA"/>
</dbReference>
<dbReference type="RefSeq" id="WP_005619012.1">
    <property type="nucleotide sequence ID" value="NC_010939.1"/>
</dbReference>
<dbReference type="SMR" id="B3H0J7"/>
<dbReference type="KEGG" id="apa:APP7_0357"/>
<dbReference type="HOGENOM" id="CLU_009710_7_0_6"/>
<dbReference type="Proteomes" id="UP000001226">
    <property type="component" value="Chromosome"/>
</dbReference>
<dbReference type="GO" id="GO:0005829">
    <property type="term" value="C:cytosol"/>
    <property type="evidence" value="ECO:0007669"/>
    <property type="project" value="TreeGrafter"/>
</dbReference>
<dbReference type="GO" id="GO:0005524">
    <property type="term" value="F:ATP binding"/>
    <property type="evidence" value="ECO:0007669"/>
    <property type="project" value="UniProtKB-UniRule"/>
</dbReference>
<dbReference type="GO" id="GO:0046872">
    <property type="term" value="F:metal ion binding"/>
    <property type="evidence" value="ECO:0007669"/>
    <property type="project" value="UniProtKB-KW"/>
</dbReference>
<dbReference type="GO" id="GO:0004825">
    <property type="term" value="F:methionine-tRNA ligase activity"/>
    <property type="evidence" value="ECO:0007669"/>
    <property type="project" value="UniProtKB-UniRule"/>
</dbReference>
<dbReference type="GO" id="GO:0000049">
    <property type="term" value="F:tRNA binding"/>
    <property type="evidence" value="ECO:0007669"/>
    <property type="project" value="UniProtKB-KW"/>
</dbReference>
<dbReference type="GO" id="GO:0006431">
    <property type="term" value="P:methionyl-tRNA aminoacylation"/>
    <property type="evidence" value="ECO:0007669"/>
    <property type="project" value="UniProtKB-UniRule"/>
</dbReference>
<dbReference type="CDD" id="cd07957">
    <property type="entry name" value="Anticodon_Ia_Met"/>
    <property type="match status" value="1"/>
</dbReference>
<dbReference type="CDD" id="cd00814">
    <property type="entry name" value="MetRS_core"/>
    <property type="match status" value="1"/>
</dbReference>
<dbReference type="CDD" id="cd02800">
    <property type="entry name" value="tRNA_bind_EcMetRS_like"/>
    <property type="match status" value="1"/>
</dbReference>
<dbReference type="FunFam" id="1.10.730.10:FF:000005">
    <property type="entry name" value="Methionine--tRNA ligase"/>
    <property type="match status" value="1"/>
</dbReference>
<dbReference type="FunFam" id="2.20.28.20:FF:000001">
    <property type="entry name" value="Methionine--tRNA ligase"/>
    <property type="match status" value="1"/>
</dbReference>
<dbReference type="FunFam" id="2.40.50.140:FF:000042">
    <property type="entry name" value="Methionine--tRNA ligase"/>
    <property type="match status" value="1"/>
</dbReference>
<dbReference type="Gene3D" id="3.40.50.620">
    <property type="entry name" value="HUPs"/>
    <property type="match status" value="1"/>
</dbReference>
<dbReference type="Gene3D" id="1.10.730.10">
    <property type="entry name" value="Isoleucyl-tRNA Synthetase, Domain 1"/>
    <property type="match status" value="1"/>
</dbReference>
<dbReference type="Gene3D" id="2.20.28.20">
    <property type="entry name" value="Methionyl-tRNA synthetase, Zn-domain"/>
    <property type="match status" value="1"/>
</dbReference>
<dbReference type="Gene3D" id="2.40.50.140">
    <property type="entry name" value="Nucleic acid-binding proteins"/>
    <property type="match status" value="1"/>
</dbReference>
<dbReference type="HAMAP" id="MF_00098">
    <property type="entry name" value="Met_tRNA_synth_type1"/>
    <property type="match status" value="1"/>
</dbReference>
<dbReference type="InterPro" id="IPR001412">
    <property type="entry name" value="aa-tRNA-synth_I_CS"/>
</dbReference>
<dbReference type="InterPro" id="IPR041872">
    <property type="entry name" value="Anticodon_Met"/>
</dbReference>
<dbReference type="InterPro" id="IPR004495">
    <property type="entry name" value="Met-tRNA-synth_bsu_C"/>
</dbReference>
<dbReference type="InterPro" id="IPR023458">
    <property type="entry name" value="Met-tRNA_ligase_1"/>
</dbReference>
<dbReference type="InterPro" id="IPR014758">
    <property type="entry name" value="Met-tRNA_synth"/>
</dbReference>
<dbReference type="InterPro" id="IPR015413">
    <property type="entry name" value="Methionyl/Leucyl_tRNA_Synth"/>
</dbReference>
<dbReference type="InterPro" id="IPR033911">
    <property type="entry name" value="MetRS_core"/>
</dbReference>
<dbReference type="InterPro" id="IPR029038">
    <property type="entry name" value="MetRS_Zn"/>
</dbReference>
<dbReference type="InterPro" id="IPR012340">
    <property type="entry name" value="NA-bd_OB-fold"/>
</dbReference>
<dbReference type="InterPro" id="IPR014729">
    <property type="entry name" value="Rossmann-like_a/b/a_fold"/>
</dbReference>
<dbReference type="InterPro" id="IPR002547">
    <property type="entry name" value="tRNA-bd_dom"/>
</dbReference>
<dbReference type="InterPro" id="IPR009080">
    <property type="entry name" value="tRNAsynth_Ia_anticodon-bd"/>
</dbReference>
<dbReference type="NCBIfam" id="TIGR00398">
    <property type="entry name" value="metG"/>
    <property type="match status" value="1"/>
</dbReference>
<dbReference type="NCBIfam" id="TIGR00399">
    <property type="entry name" value="metG_C_term"/>
    <property type="match status" value="1"/>
</dbReference>
<dbReference type="NCBIfam" id="NF001100">
    <property type="entry name" value="PRK00133.1"/>
    <property type="match status" value="1"/>
</dbReference>
<dbReference type="PANTHER" id="PTHR45765">
    <property type="entry name" value="METHIONINE--TRNA LIGASE"/>
    <property type="match status" value="1"/>
</dbReference>
<dbReference type="PANTHER" id="PTHR45765:SF1">
    <property type="entry name" value="METHIONINE--TRNA LIGASE, CYTOPLASMIC"/>
    <property type="match status" value="1"/>
</dbReference>
<dbReference type="Pfam" id="PF19303">
    <property type="entry name" value="Anticodon_3"/>
    <property type="match status" value="1"/>
</dbReference>
<dbReference type="Pfam" id="PF09334">
    <property type="entry name" value="tRNA-synt_1g"/>
    <property type="match status" value="1"/>
</dbReference>
<dbReference type="Pfam" id="PF01588">
    <property type="entry name" value="tRNA_bind"/>
    <property type="match status" value="1"/>
</dbReference>
<dbReference type="PRINTS" id="PR01041">
    <property type="entry name" value="TRNASYNTHMET"/>
</dbReference>
<dbReference type="SUPFAM" id="SSF47323">
    <property type="entry name" value="Anticodon-binding domain of a subclass of class I aminoacyl-tRNA synthetases"/>
    <property type="match status" value="1"/>
</dbReference>
<dbReference type="SUPFAM" id="SSF57770">
    <property type="entry name" value="Methionyl-tRNA synthetase (MetRS), Zn-domain"/>
    <property type="match status" value="1"/>
</dbReference>
<dbReference type="SUPFAM" id="SSF50249">
    <property type="entry name" value="Nucleic acid-binding proteins"/>
    <property type="match status" value="1"/>
</dbReference>
<dbReference type="SUPFAM" id="SSF52374">
    <property type="entry name" value="Nucleotidylyl transferase"/>
    <property type="match status" value="1"/>
</dbReference>
<dbReference type="PROSITE" id="PS00178">
    <property type="entry name" value="AA_TRNA_LIGASE_I"/>
    <property type="match status" value="1"/>
</dbReference>
<dbReference type="PROSITE" id="PS50886">
    <property type="entry name" value="TRBD"/>
    <property type="match status" value="1"/>
</dbReference>
<comment type="function">
    <text evidence="1">Is required not only for elongation of protein synthesis but also for the initiation of all mRNA translation through initiator tRNA(fMet) aminoacylation.</text>
</comment>
<comment type="catalytic activity">
    <reaction evidence="1">
        <text>tRNA(Met) + L-methionine + ATP = L-methionyl-tRNA(Met) + AMP + diphosphate</text>
        <dbReference type="Rhea" id="RHEA:13481"/>
        <dbReference type="Rhea" id="RHEA-COMP:9667"/>
        <dbReference type="Rhea" id="RHEA-COMP:9698"/>
        <dbReference type="ChEBI" id="CHEBI:30616"/>
        <dbReference type="ChEBI" id="CHEBI:33019"/>
        <dbReference type="ChEBI" id="CHEBI:57844"/>
        <dbReference type="ChEBI" id="CHEBI:78442"/>
        <dbReference type="ChEBI" id="CHEBI:78530"/>
        <dbReference type="ChEBI" id="CHEBI:456215"/>
        <dbReference type="EC" id="6.1.1.10"/>
    </reaction>
</comment>
<comment type="cofactor">
    <cofactor evidence="1">
        <name>Zn(2+)</name>
        <dbReference type="ChEBI" id="CHEBI:29105"/>
    </cofactor>
    <text evidence="1">Binds 1 zinc ion per subunit.</text>
</comment>
<comment type="subunit">
    <text evidence="1">Homodimer.</text>
</comment>
<comment type="subcellular location">
    <subcellularLocation>
        <location evidence="1">Cytoplasm</location>
    </subcellularLocation>
</comment>
<comment type="similarity">
    <text evidence="1">Belongs to the class-I aminoacyl-tRNA synthetase family. MetG type 1 subfamily.</text>
</comment>
<accession>B3H0J7</accession>
<proteinExistence type="inferred from homology"/>
<evidence type="ECO:0000255" key="1">
    <source>
        <dbReference type="HAMAP-Rule" id="MF_00098"/>
    </source>
</evidence>
<reference key="1">
    <citation type="submission" date="2008-06" db="EMBL/GenBank/DDBJ databases">
        <title>Genome and proteome analysis of A. pleuropneumoniae serotype 7.</title>
        <authorList>
            <person name="Linke B."/>
            <person name="Buettner F."/>
            <person name="Martinez-Arias R."/>
            <person name="Goesmann A."/>
            <person name="Baltes N."/>
            <person name="Tegetmeyer H."/>
            <person name="Singh M."/>
            <person name="Gerlach G.F."/>
        </authorList>
    </citation>
    <scope>NUCLEOTIDE SEQUENCE [LARGE SCALE GENOMIC DNA]</scope>
    <source>
        <strain>AP76</strain>
    </source>
</reference>
<sequence>MSRKMLVTCALPYANGAIHLGHMLEHIQADIWVRFQRMRGNEIYFVCADDAHGTPIMLNAAKQGITPEQLIEKAKTDHVADFKGFNISFDNYHSTHSEENREITTEMYKKLRANGFIKSRVISQLFDPEKQMFLPDRFVKGTCPKCKAEDQYGDNCEVCASTYSPMDLINPRSAVSGATPIVKESEHFFFDLPSFEGMLKEWTRSGSLQSEIANKMQEWFESGLQQWDISRDAPYFGFPIPDAENKFFYVWLDAPIGYMASFKNLCDRTGLNFDEFWKKDSETELYHFIGKDIVYFHSLFWPAMLDGCELRKPTNVFAHGYVTVDGVKMSKSRGTFIQASTYLKHIDPECLRYYYAAKLNERIEDLDLSLEDFVQRVNSDIVNKLVNLASRNASFIAKRFEGKLADKLEDEALFAEFIAQSEQIAAHYENREFNKAIRLIMDLCDKANKYVDDKAPWVIAKQEGCDAQLQAVCSMGIELFRVLMSYLKPVLPQLAERAEAFLQTELTWDNIQQPLLGQNVAPFKSLFSRLEKKQIDAVIEETKALFAAQNKAEDKKGKQKVENTENTAVEPIAAEITIDDFAKLDLRVAKVISCEAVPESNKLLKFQLDLGDHQRQVLSGIKAAYNNPEELVGRFVIMVANLAPRKMKFGVSEGMILSAGTGGADLFLLSADEGIRPGMQVK</sequence>
<protein>
    <recommendedName>
        <fullName evidence="1">Methionine--tRNA ligase</fullName>
        <ecNumber evidence="1">6.1.1.10</ecNumber>
    </recommendedName>
    <alternativeName>
        <fullName evidence="1">Methionyl-tRNA synthetase</fullName>
        <shortName evidence="1">MetRS</shortName>
    </alternativeName>
</protein>
<feature type="chain" id="PRO_1000093693" description="Methionine--tRNA ligase">
    <location>
        <begin position="1"/>
        <end position="682"/>
    </location>
</feature>
<feature type="domain" description="tRNA-binding" evidence="1">
    <location>
        <begin position="580"/>
        <end position="682"/>
    </location>
</feature>
<feature type="short sequence motif" description="'HIGH' region">
    <location>
        <begin position="12"/>
        <end position="22"/>
    </location>
</feature>
<feature type="short sequence motif" description="'KMSKS' region">
    <location>
        <begin position="328"/>
        <end position="332"/>
    </location>
</feature>
<feature type="binding site" evidence="1">
    <location>
        <position position="143"/>
    </location>
    <ligand>
        <name>Zn(2+)</name>
        <dbReference type="ChEBI" id="CHEBI:29105"/>
    </ligand>
</feature>
<feature type="binding site" evidence="1">
    <location>
        <position position="146"/>
    </location>
    <ligand>
        <name>Zn(2+)</name>
        <dbReference type="ChEBI" id="CHEBI:29105"/>
    </ligand>
</feature>
<feature type="binding site" evidence="1">
    <location>
        <position position="156"/>
    </location>
    <ligand>
        <name>Zn(2+)</name>
        <dbReference type="ChEBI" id="CHEBI:29105"/>
    </ligand>
</feature>
<feature type="binding site" evidence="1">
    <location>
        <position position="159"/>
    </location>
    <ligand>
        <name>Zn(2+)</name>
        <dbReference type="ChEBI" id="CHEBI:29105"/>
    </ligand>
</feature>
<feature type="binding site" evidence="1">
    <location>
        <position position="331"/>
    </location>
    <ligand>
        <name>ATP</name>
        <dbReference type="ChEBI" id="CHEBI:30616"/>
    </ligand>
</feature>
<keyword id="KW-0030">Aminoacyl-tRNA synthetase</keyword>
<keyword id="KW-0067">ATP-binding</keyword>
<keyword id="KW-0963">Cytoplasm</keyword>
<keyword id="KW-0436">Ligase</keyword>
<keyword id="KW-0479">Metal-binding</keyword>
<keyword id="KW-0547">Nucleotide-binding</keyword>
<keyword id="KW-0648">Protein biosynthesis</keyword>
<keyword id="KW-0694">RNA-binding</keyword>
<keyword id="KW-0820">tRNA-binding</keyword>
<keyword id="KW-0862">Zinc</keyword>
<name>SYM_ACTP7</name>
<gene>
    <name evidence="1" type="primary">metG</name>
    <name type="ordered locus">APP7_0357</name>
</gene>
<organism>
    <name type="scientific">Actinobacillus pleuropneumoniae serotype 7 (strain AP76)</name>
    <dbReference type="NCBI Taxonomy" id="537457"/>
    <lineage>
        <taxon>Bacteria</taxon>
        <taxon>Pseudomonadati</taxon>
        <taxon>Pseudomonadota</taxon>
        <taxon>Gammaproteobacteria</taxon>
        <taxon>Pasteurellales</taxon>
        <taxon>Pasteurellaceae</taxon>
        <taxon>Actinobacillus</taxon>
    </lineage>
</organism>